<keyword id="KW-0066">ATP synthesis</keyword>
<keyword id="KW-0067">ATP-binding</keyword>
<keyword id="KW-0375">Hydrogen ion transport</keyword>
<keyword id="KW-0406">Ion transport</keyword>
<keyword id="KW-0547">Nucleotide-binding</keyword>
<keyword id="KW-1278">Translocase</keyword>
<keyword id="KW-0813">Transport</keyword>
<gene>
    <name evidence="1" type="primary">atpA</name>
    <name type="ordered locus">AnaeK_2668</name>
</gene>
<dbReference type="EC" id="7.1.2.2" evidence="1"/>
<dbReference type="EMBL" id="CP001131">
    <property type="protein sequence ID" value="ACG73893.1"/>
    <property type="molecule type" value="Genomic_DNA"/>
</dbReference>
<dbReference type="RefSeq" id="WP_012526674.1">
    <property type="nucleotide sequence ID" value="NC_011145.1"/>
</dbReference>
<dbReference type="SMR" id="B4UH39"/>
<dbReference type="KEGG" id="ank:AnaeK_2668"/>
<dbReference type="HOGENOM" id="CLU_008162_3_1_7"/>
<dbReference type="OrthoDB" id="9801639at2"/>
<dbReference type="Proteomes" id="UP000001871">
    <property type="component" value="Chromosome"/>
</dbReference>
<dbReference type="GO" id="GO:0045259">
    <property type="term" value="C:proton-transporting ATP synthase complex"/>
    <property type="evidence" value="ECO:0007669"/>
    <property type="project" value="UniProtKB-ARBA"/>
</dbReference>
<dbReference type="GO" id="GO:0005524">
    <property type="term" value="F:ATP binding"/>
    <property type="evidence" value="ECO:0007669"/>
    <property type="project" value="UniProtKB-UniRule"/>
</dbReference>
<dbReference type="GO" id="GO:0046933">
    <property type="term" value="F:proton-transporting ATP synthase activity, rotational mechanism"/>
    <property type="evidence" value="ECO:0007669"/>
    <property type="project" value="UniProtKB-UniRule"/>
</dbReference>
<dbReference type="GO" id="GO:0046961">
    <property type="term" value="F:proton-transporting ATPase activity, rotational mechanism"/>
    <property type="evidence" value="ECO:0007669"/>
    <property type="project" value="InterPro"/>
</dbReference>
<dbReference type="GO" id="GO:0042777">
    <property type="term" value="P:proton motive force-driven plasma membrane ATP synthesis"/>
    <property type="evidence" value="ECO:0007669"/>
    <property type="project" value="UniProtKB-UniRule"/>
</dbReference>
<dbReference type="CDD" id="cd18111">
    <property type="entry name" value="ATP-synt_V_A-type_alpha_C"/>
    <property type="match status" value="1"/>
</dbReference>
<dbReference type="CDD" id="cd18119">
    <property type="entry name" value="ATP-synt_V_A-type_alpha_N"/>
    <property type="match status" value="1"/>
</dbReference>
<dbReference type="CDD" id="cd01134">
    <property type="entry name" value="V_A-ATPase_A"/>
    <property type="match status" value="1"/>
</dbReference>
<dbReference type="FunFam" id="2.40.30.20:FF:000002">
    <property type="entry name" value="V-type proton ATPase catalytic subunit A"/>
    <property type="match status" value="1"/>
</dbReference>
<dbReference type="Gene3D" id="2.40.30.20">
    <property type="match status" value="1"/>
</dbReference>
<dbReference type="Gene3D" id="2.40.50.100">
    <property type="match status" value="1"/>
</dbReference>
<dbReference type="Gene3D" id="1.10.1140.10">
    <property type="entry name" value="Bovine Mitochondrial F1-atpase, Atp Synthase Beta Chain, Chain D, domain 3"/>
    <property type="match status" value="1"/>
</dbReference>
<dbReference type="Gene3D" id="3.40.50.300">
    <property type="entry name" value="P-loop containing nucleotide triphosphate hydrolases"/>
    <property type="match status" value="1"/>
</dbReference>
<dbReference type="HAMAP" id="MF_00309">
    <property type="entry name" value="ATP_synth_A_arch"/>
    <property type="match status" value="1"/>
</dbReference>
<dbReference type="InterPro" id="IPR055190">
    <property type="entry name" value="ATP-synt_VA_C"/>
</dbReference>
<dbReference type="InterPro" id="IPR031686">
    <property type="entry name" value="ATP-synth_a_Xtn"/>
</dbReference>
<dbReference type="InterPro" id="IPR023366">
    <property type="entry name" value="ATP_synth_asu-like_sf"/>
</dbReference>
<dbReference type="InterPro" id="IPR004100">
    <property type="entry name" value="ATPase_F1/V1/A1_a/bsu_N"/>
</dbReference>
<dbReference type="InterPro" id="IPR036121">
    <property type="entry name" value="ATPase_F1/V1/A1_a/bsu_N_sf"/>
</dbReference>
<dbReference type="InterPro" id="IPR000194">
    <property type="entry name" value="ATPase_F1/V1/A1_a/bsu_nucl-bd"/>
</dbReference>
<dbReference type="InterPro" id="IPR024034">
    <property type="entry name" value="ATPase_F1/V1_b/a_C"/>
</dbReference>
<dbReference type="InterPro" id="IPR027417">
    <property type="entry name" value="P-loop_NTPase"/>
</dbReference>
<dbReference type="InterPro" id="IPR022878">
    <property type="entry name" value="V-ATPase_asu"/>
</dbReference>
<dbReference type="NCBIfam" id="NF003220">
    <property type="entry name" value="PRK04192.1"/>
    <property type="match status" value="1"/>
</dbReference>
<dbReference type="PANTHER" id="PTHR43607:SF1">
    <property type="entry name" value="H(+)-TRANSPORTING TWO-SECTOR ATPASE"/>
    <property type="match status" value="1"/>
</dbReference>
<dbReference type="PANTHER" id="PTHR43607">
    <property type="entry name" value="V-TYPE PROTON ATPASE CATALYTIC SUBUNIT A"/>
    <property type="match status" value="1"/>
</dbReference>
<dbReference type="Pfam" id="PF00006">
    <property type="entry name" value="ATP-synt_ab"/>
    <property type="match status" value="1"/>
</dbReference>
<dbReference type="Pfam" id="PF02874">
    <property type="entry name" value="ATP-synt_ab_N"/>
    <property type="match status" value="1"/>
</dbReference>
<dbReference type="Pfam" id="PF16886">
    <property type="entry name" value="ATP-synt_ab_Xtn"/>
    <property type="match status" value="1"/>
</dbReference>
<dbReference type="Pfam" id="PF22919">
    <property type="entry name" value="ATP-synt_VA_C"/>
    <property type="match status" value="1"/>
</dbReference>
<dbReference type="SUPFAM" id="SSF47917">
    <property type="entry name" value="C-terminal domain of alpha and beta subunits of F1 ATP synthase"/>
    <property type="match status" value="1"/>
</dbReference>
<dbReference type="SUPFAM" id="SSF50615">
    <property type="entry name" value="N-terminal domain of alpha and beta subunits of F1 ATP synthase"/>
    <property type="match status" value="1"/>
</dbReference>
<dbReference type="SUPFAM" id="SSF52540">
    <property type="entry name" value="P-loop containing nucleoside triphosphate hydrolases"/>
    <property type="match status" value="1"/>
</dbReference>
<name>VATA_ANASK</name>
<comment type="function">
    <text evidence="1">Produces ATP from ADP in the presence of a proton gradient across the membrane. The V-type alpha chain is a catalytic subunit.</text>
</comment>
<comment type="catalytic activity">
    <reaction evidence="1">
        <text>ATP + H2O + 4 H(+)(in) = ADP + phosphate + 5 H(+)(out)</text>
        <dbReference type="Rhea" id="RHEA:57720"/>
        <dbReference type="ChEBI" id="CHEBI:15377"/>
        <dbReference type="ChEBI" id="CHEBI:15378"/>
        <dbReference type="ChEBI" id="CHEBI:30616"/>
        <dbReference type="ChEBI" id="CHEBI:43474"/>
        <dbReference type="ChEBI" id="CHEBI:456216"/>
        <dbReference type="EC" id="7.1.2.2"/>
    </reaction>
</comment>
<comment type="similarity">
    <text evidence="1">Belongs to the ATPase alpha/beta chains family.</text>
</comment>
<organism>
    <name type="scientific">Anaeromyxobacter sp. (strain K)</name>
    <dbReference type="NCBI Taxonomy" id="447217"/>
    <lineage>
        <taxon>Bacteria</taxon>
        <taxon>Pseudomonadati</taxon>
        <taxon>Myxococcota</taxon>
        <taxon>Myxococcia</taxon>
        <taxon>Myxococcales</taxon>
        <taxon>Cystobacterineae</taxon>
        <taxon>Anaeromyxobacteraceae</taxon>
        <taxon>Anaeromyxobacter</taxon>
    </lineage>
</organism>
<feature type="chain" id="PRO_1000115630" description="V-type ATP synthase alpha chain">
    <location>
        <begin position="1"/>
        <end position="579"/>
    </location>
</feature>
<feature type="binding site" evidence="1">
    <location>
        <begin position="227"/>
        <end position="234"/>
    </location>
    <ligand>
        <name>ATP</name>
        <dbReference type="ChEBI" id="CHEBI:30616"/>
    </ligand>
</feature>
<sequence length="579" mass="61596">MSGTLMRMAGPTVVAEGLSGASLNEVVRVGEERLLGEIIRIEGDRATIQVYEETAGLALGEPVEASGEPLAVELGPGLLGSVFDGVQRPLSELAAREGDFLGRGASLPALDRARAWEFEPAVAPGDRVEGGARLGVARAPGAPDHLVVVPPGVTGRVSEVRGGARRVDEPAVLLDGGATLALLERWPVRRPRPARRRLPPDVPFLTGQRVLDCFFPVSAGGTAVVPGGFGTGKTVLEQSLAKWAAADVVVYVGCGERGNEMSEVLDEFPRLEDPRTGGPLLARTVMIVNTSNMPVAAREASIYTGCAIAEYFRDMGRSVALMIDSTSRWAEALREISARLEEMPGEEGYPTYLASRLARFYERAGRVETLGGAEGAVTMVGAVSPPGGDLSEPVTQCSLRATGALWALSADLAHRRHYPAVDWSVSFTLEGDRLAGWFEREAGDGFGALRDEARKLLQRERELAEVAELVGTESLQDAERLVLESARLLREGFLRQSALDPADATCPPAKAFEMLRLFLEWHRRAGAAVGAGVPLRSILDTGLGARLLRLAQLPAAEVPGAAAALRADLSEALARLEAE</sequence>
<evidence type="ECO:0000255" key="1">
    <source>
        <dbReference type="HAMAP-Rule" id="MF_00309"/>
    </source>
</evidence>
<reference key="1">
    <citation type="submission" date="2008-08" db="EMBL/GenBank/DDBJ databases">
        <title>Complete sequence of Anaeromyxobacter sp. K.</title>
        <authorList>
            <consortium name="US DOE Joint Genome Institute"/>
            <person name="Lucas S."/>
            <person name="Copeland A."/>
            <person name="Lapidus A."/>
            <person name="Glavina del Rio T."/>
            <person name="Dalin E."/>
            <person name="Tice H."/>
            <person name="Bruce D."/>
            <person name="Goodwin L."/>
            <person name="Pitluck S."/>
            <person name="Saunders E."/>
            <person name="Brettin T."/>
            <person name="Detter J.C."/>
            <person name="Han C."/>
            <person name="Larimer F."/>
            <person name="Land M."/>
            <person name="Hauser L."/>
            <person name="Kyrpides N."/>
            <person name="Ovchinnikiva G."/>
            <person name="Beliaev A."/>
        </authorList>
    </citation>
    <scope>NUCLEOTIDE SEQUENCE [LARGE SCALE GENOMIC DNA]</scope>
    <source>
        <strain>K</strain>
    </source>
</reference>
<accession>B4UH39</accession>
<protein>
    <recommendedName>
        <fullName evidence="1">V-type ATP synthase alpha chain</fullName>
        <ecNumber evidence="1">7.1.2.2</ecNumber>
    </recommendedName>
    <alternativeName>
        <fullName evidence="1">V-ATPase subunit A</fullName>
    </alternativeName>
</protein>
<proteinExistence type="inferred from homology"/>